<proteinExistence type="inferred from homology"/>
<feature type="initiator methionine" description="Removed" evidence="2">
    <location>
        <position position="1"/>
    </location>
</feature>
<feature type="propeptide" id="PRO_0000365693" description="Removed in mature form" evidence="2">
    <location>
        <position position="2"/>
    </location>
</feature>
<feature type="chain" id="PRO_0000365694" description="Adenylate kinase">
    <location>
        <begin position="3"/>
        <end position="222"/>
    </location>
</feature>
<feature type="region of interest" description="NMP" evidence="2">
    <location>
        <begin position="36"/>
        <end position="65"/>
    </location>
</feature>
<feature type="region of interest" description="LID" evidence="2">
    <location>
        <begin position="133"/>
        <end position="170"/>
    </location>
</feature>
<feature type="binding site" evidence="2">
    <location>
        <begin position="16"/>
        <end position="21"/>
    </location>
    <ligand>
        <name>ATP</name>
        <dbReference type="ChEBI" id="CHEBI:30616"/>
    </ligand>
</feature>
<feature type="binding site" evidence="2">
    <location>
        <position position="37"/>
    </location>
    <ligand>
        <name>AMP</name>
        <dbReference type="ChEBI" id="CHEBI:456215"/>
    </ligand>
</feature>
<feature type="binding site" evidence="2">
    <location>
        <position position="42"/>
    </location>
    <ligand>
        <name>AMP</name>
        <dbReference type="ChEBI" id="CHEBI:456215"/>
    </ligand>
</feature>
<feature type="binding site" evidence="2">
    <location>
        <begin position="63"/>
        <end position="65"/>
    </location>
    <ligand>
        <name>AMP</name>
        <dbReference type="ChEBI" id="CHEBI:456215"/>
    </ligand>
</feature>
<feature type="binding site" evidence="2">
    <location>
        <begin position="92"/>
        <end position="95"/>
    </location>
    <ligand>
        <name>AMP</name>
        <dbReference type="ChEBI" id="CHEBI:456215"/>
    </ligand>
</feature>
<feature type="binding site" evidence="2">
    <location>
        <position position="99"/>
    </location>
    <ligand>
        <name>AMP</name>
        <dbReference type="ChEBI" id="CHEBI:456215"/>
    </ligand>
</feature>
<feature type="binding site" evidence="2">
    <location>
        <position position="134"/>
    </location>
    <ligand>
        <name>ATP</name>
        <dbReference type="ChEBI" id="CHEBI:30616"/>
    </ligand>
</feature>
<feature type="binding site" evidence="2">
    <location>
        <begin position="143"/>
        <end position="144"/>
    </location>
    <ligand>
        <name>ATP</name>
        <dbReference type="ChEBI" id="CHEBI:30616"/>
    </ligand>
</feature>
<feature type="binding site" evidence="2">
    <location>
        <position position="167"/>
    </location>
    <ligand>
        <name>AMP</name>
        <dbReference type="ChEBI" id="CHEBI:456215"/>
    </ligand>
</feature>
<feature type="binding site" evidence="2">
    <location>
        <position position="178"/>
    </location>
    <ligand>
        <name>AMP</name>
        <dbReference type="ChEBI" id="CHEBI:456215"/>
    </ligand>
</feature>
<feature type="binding site" evidence="2">
    <location>
        <position position="206"/>
    </location>
    <ligand>
        <name>ATP</name>
        <dbReference type="ChEBI" id="CHEBI:30616"/>
    </ligand>
</feature>
<feature type="modified residue" description="N-acetylserine" evidence="1 2">
    <location>
        <position position="2"/>
    </location>
</feature>
<feature type="modified residue" description="N-acetylserine" evidence="1 2">
    <location>
        <position position="3"/>
    </location>
</feature>
<accession>A6ZYI0</accession>
<protein>
    <recommendedName>
        <fullName evidence="2">Adenylate kinase</fullName>
        <ecNumber evidence="2">2.7.4.3</ecNumber>
    </recommendedName>
    <alternativeName>
        <fullName evidence="2">ATP-AMP transphosphorylase</fullName>
    </alternativeName>
    <alternativeName>
        <fullName evidence="2">ATP:AMP phosphotransferase</fullName>
    </alternativeName>
    <alternativeName>
        <fullName evidence="2">Adenylate kinase cytosolic and mitochondrial</fullName>
    </alternativeName>
    <alternativeName>
        <fullName evidence="2">Adenylate monophosphate kinase</fullName>
    </alternativeName>
</protein>
<name>KAD2_YEAS7</name>
<dbReference type="EC" id="2.7.4.3" evidence="2"/>
<dbReference type="EMBL" id="AAFW02000145">
    <property type="protein sequence ID" value="EDN60560.1"/>
    <property type="molecule type" value="Genomic_DNA"/>
</dbReference>
<dbReference type="SMR" id="A6ZYI0"/>
<dbReference type="TopDownProteomics" id="A6ZYI0"/>
<dbReference type="HOGENOM" id="CLU_032354_1_0_1"/>
<dbReference type="Proteomes" id="UP000007060">
    <property type="component" value="Unassembled WGS sequence"/>
</dbReference>
<dbReference type="GO" id="GO:0005829">
    <property type="term" value="C:cytosol"/>
    <property type="evidence" value="ECO:0007669"/>
    <property type="project" value="UniProtKB-SubCell"/>
</dbReference>
<dbReference type="GO" id="GO:0005758">
    <property type="term" value="C:mitochondrial intermembrane space"/>
    <property type="evidence" value="ECO:0007669"/>
    <property type="project" value="UniProtKB-SubCell"/>
</dbReference>
<dbReference type="GO" id="GO:0004017">
    <property type="term" value="F:adenylate kinase activity"/>
    <property type="evidence" value="ECO:0007669"/>
    <property type="project" value="UniProtKB-UniRule"/>
</dbReference>
<dbReference type="GO" id="GO:0005524">
    <property type="term" value="F:ATP binding"/>
    <property type="evidence" value="ECO:0007669"/>
    <property type="project" value="UniProtKB-KW"/>
</dbReference>
<dbReference type="GO" id="GO:0006172">
    <property type="term" value="P:ADP biosynthetic process"/>
    <property type="evidence" value="ECO:0007669"/>
    <property type="project" value="UniProtKB-UniRule"/>
</dbReference>
<dbReference type="GO" id="GO:0046033">
    <property type="term" value="P:AMP metabolic process"/>
    <property type="evidence" value="ECO:0007669"/>
    <property type="project" value="UniProtKB-UniRule"/>
</dbReference>
<dbReference type="GO" id="GO:0046034">
    <property type="term" value="P:ATP metabolic process"/>
    <property type="evidence" value="ECO:0007669"/>
    <property type="project" value="UniProtKB-UniRule"/>
</dbReference>
<dbReference type="CDD" id="cd01428">
    <property type="entry name" value="ADK"/>
    <property type="match status" value="1"/>
</dbReference>
<dbReference type="FunFam" id="3.40.50.300:FF:000106">
    <property type="entry name" value="Adenylate kinase mitochondrial"/>
    <property type="match status" value="1"/>
</dbReference>
<dbReference type="Gene3D" id="3.40.50.300">
    <property type="entry name" value="P-loop containing nucleotide triphosphate hydrolases"/>
    <property type="match status" value="1"/>
</dbReference>
<dbReference type="HAMAP" id="MF_00235">
    <property type="entry name" value="Adenylate_kinase_Adk"/>
    <property type="match status" value="1"/>
</dbReference>
<dbReference type="HAMAP" id="MF_03168">
    <property type="entry name" value="Adenylate_kinase_AK2"/>
    <property type="match status" value="1"/>
</dbReference>
<dbReference type="InterPro" id="IPR006259">
    <property type="entry name" value="Adenyl_kin_sub"/>
</dbReference>
<dbReference type="InterPro" id="IPR000850">
    <property type="entry name" value="Adenylat/UMP-CMP_kin"/>
</dbReference>
<dbReference type="InterPro" id="IPR033690">
    <property type="entry name" value="Adenylat_kinase_CS"/>
</dbReference>
<dbReference type="InterPro" id="IPR007862">
    <property type="entry name" value="Adenylate_kinase_lid-dom"/>
</dbReference>
<dbReference type="InterPro" id="IPR028587">
    <property type="entry name" value="AK2"/>
</dbReference>
<dbReference type="InterPro" id="IPR027417">
    <property type="entry name" value="P-loop_NTPase"/>
</dbReference>
<dbReference type="NCBIfam" id="TIGR01351">
    <property type="entry name" value="adk"/>
    <property type="match status" value="1"/>
</dbReference>
<dbReference type="NCBIfam" id="NF001380">
    <property type="entry name" value="PRK00279.1-2"/>
    <property type="match status" value="1"/>
</dbReference>
<dbReference type="NCBIfam" id="NF001381">
    <property type="entry name" value="PRK00279.1-3"/>
    <property type="match status" value="1"/>
</dbReference>
<dbReference type="NCBIfam" id="NF011100">
    <property type="entry name" value="PRK14527.1"/>
    <property type="match status" value="1"/>
</dbReference>
<dbReference type="PANTHER" id="PTHR23359">
    <property type="entry name" value="NUCLEOTIDE KINASE"/>
    <property type="match status" value="1"/>
</dbReference>
<dbReference type="Pfam" id="PF00406">
    <property type="entry name" value="ADK"/>
    <property type="match status" value="1"/>
</dbReference>
<dbReference type="Pfam" id="PF05191">
    <property type="entry name" value="ADK_lid"/>
    <property type="match status" value="1"/>
</dbReference>
<dbReference type="PRINTS" id="PR00094">
    <property type="entry name" value="ADENYLTKNASE"/>
</dbReference>
<dbReference type="SUPFAM" id="SSF52540">
    <property type="entry name" value="P-loop containing nucleoside triphosphate hydrolases"/>
    <property type="match status" value="1"/>
</dbReference>
<dbReference type="PROSITE" id="PS00113">
    <property type="entry name" value="ADENYLATE_KINASE"/>
    <property type="match status" value="1"/>
</dbReference>
<reference key="1">
    <citation type="journal article" date="2007" name="Proc. Natl. Acad. Sci. U.S.A.">
        <title>Genome sequencing and comparative analysis of Saccharomyces cerevisiae strain YJM789.</title>
        <authorList>
            <person name="Wei W."/>
            <person name="McCusker J.H."/>
            <person name="Hyman R.W."/>
            <person name="Jones T."/>
            <person name="Ning Y."/>
            <person name="Cao Z."/>
            <person name="Gu Z."/>
            <person name="Bruno D."/>
            <person name="Miranda M."/>
            <person name="Nguyen M."/>
            <person name="Wilhelmy J."/>
            <person name="Komp C."/>
            <person name="Tamse R."/>
            <person name="Wang X."/>
            <person name="Jia P."/>
            <person name="Luedi P."/>
            <person name="Oefner P.J."/>
            <person name="David L."/>
            <person name="Dietrich F.S."/>
            <person name="Li Y."/>
            <person name="Davis R.W."/>
            <person name="Steinmetz L.M."/>
        </authorList>
    </citation>
    <scope>NUCLEOTIDE SEQUENCE [LARGE SCALE GENOMIC DNA]</scope>
    <source>
        <strain>YJM789</strain>
    </source>
</reference>
<evidence type="ECO:0000250" key="1">
    <source>
        <dbReference type="UniProtKB" id="P07170"/>
    </source>
</evidence>
<evidence type="ECO:0000255" key="2">
    <source>
        <dbReference type="HAMAP-Rule" id="MF_03168"/>
    </source>
</evidence>
<comment type="function">
    <text evidence="2">Catalyzes the reversible transfer of the terminal phosphate group between ATP and AMP. Plays an important role in cellular energy homeostasis and in adenine nucleotide metabolism. Adenylate kinase activity is critical for regulation of the phosphate utilization and the AMP de novo biosynthesis pathways.</text>
</comment>
<comment type="catalytic activity">
    <reaction evidence="2">
        <text>AMP + ATP = 2 ADP</text>
        <dbReference type="Rhea" id="RHEA:12973"/>
        <dbReference type="ChEBI" id="CHEBI:30616"/>
        <dbReference type="ChEBI" id="CHEBI:456215"/>
        <dbReference type="ChEBI" id="CHEBI:456216"/>
        <dbReference type="EC" id="2.7.4.3"/>
    </reaction>
</comment>
<comment type="subunit">
    <text evidence="2">Monomer.</text>
</comment>
<comment type="subcellular location">
    <subcellularLocation>
        <location evidence="2">Cytoplasm</location>
        <location evidence="2">Cytosol</location>
    </subcellularLocation>
    <subcellularLocation>
        <location evidence="2">Mitochondrion intermembrane space</location>
    </subcellularLocation>
    <text evidence="2">Predominantly mitochondrial.</text>
</comment>
<comment type="domain">
    <text evidence="2">Consists of three domains, a large central CORE domain and two small peripheral domains, NMPbind and LID, which undergo movements during catalysis. The LID domain closes over the site of phosphoryl transfer upon ATP binding. Assembling and dissambling the active center during each catalytic cycle provides an effective means to prevent ATP hydrolysis.</text>
</comment>
<comment type="similarity">
    <text evidence="2">Belongs to the adenylate kinase family. AK2 subfamily.</text>
</comment>
<sequence length="222" mass="24254">MSSSESIRMVLIGPPGAGKGTQAPNLQERFHAAHLATGDMLRSQIAKGTQLGLEAKKIMDQGGLVSDDIMVNMIKDELTNNPACKNGFILDGFPRTIPQAEKLDQMLKEQGTPLEKAIELKVDDELLVARITGRLIHPASGRSYHKIFNPPKEDMKDDVTGEALVQRSDDNADALKKRLAAYHAQTEPIVDFYKKTGIWAGVDASQPPATVWADILNKLGKN</sequence>
<keyword id="KW-0007">Acetylation</keyword>
<keyword id="KW-0067">ATP-binding</keyword>
<keyword id="KW-0963">Cytoplasm</keyword>
<keyword id="KW-0418">Kinase</keyword>
<keyword id="KW-0496">Mitochondrion</keyword>
<keyword id="KW-0547">Nucleotide-binding</keyword>
<keyword id="KW-0808">Transferase</keyword>
<gene>
    <name evidence="2" type="primary">ADK1</name>
    <name type="ORF">SCY_1118</name>
</gene>
<organism>
    <name type="scientific">Saccharomyces cerevisiae (strain YJM789)</name>
    <name type="common">Baker's yeast</name>
    <dbReference type="NCBI Taxonomy" id="307796"/>
    <lineage>
        <taxon>Eukaryota</taxon>
        <taxon>Fungi</taxon>
        <taxon>Dikarya</taxon>
        <taxon>Ascomycota</taxon>
        <taxon>Saccharomycotina</taxon>
        <taxon>Saccharomycetes</taxon>
        <taxon>Saccharomycetales</taxon>
        <taxon>Saccharomycetaceae</taxon>
        <taxon>Saccharomyces</taxon>
    </lineage>
</organism>